<proteinExistence type="evidence at transcript level"/>
<reference evidence="6" key="1">
    <citation type="journal article" date="2013" name="Nature">
        <title>The zebrafish reference genome sequence and its relationship to the human genome.</title>
        <authorList>
            <person name="Howe K."/>
            <person name="Clark M.D."/>
            <person name="Torroja C.F."/>
            <person name="Torrance J."/>
            <person name="Berthelot C."/>
            <person name="Muffato M."/>
            <person name="Collins J.E."/>
            <person name="Humphray S."/>
            <person name="McLaren K."/>
            <person name="Matthews L."/>
            <person name="McLaren S."/>
            <person name="Sealy I."/>
            <person name="Caccamo M."/>
            <person name="Churcher C."/>
            <person name="Scott C."/>
            <person name="Barrett J.C."/>
            <person name="Koch R."/>
            <person name="Rauch G.J."/>
            <person name="White S."/>
            <person name="Chow W."/>
            <person name="Kilian B."/>
            <person name="Quintais L.T."/>
            <person name="Guerra-Assuncao J.A."/>
            <person name="Zhou Y."/>
            <person name="Gu Y."/>
            <person name="Yen J."/>
            <person name="Vogel J.H."/>
            <person name="Eyre T."/>
            <person name="Redmond S."/>
            <person name="Banerjee R."/>
            <person name="Chi J."/>
            <person name="Fu B."/>
            <person name="Langley E."/>
            <person name="Maguire S.F."/>
            <person name="Laird G.K."/>
            <person name="Lloyd D."/>
            <person name="Kenyon E."/>
            <person name="Donaldson S."/>
            <person name="Sehra H."/>
            <person name="Almeida-King J."/>
            <person name="Loveland J."/>
            <person name="Trevanion S."/>
            <person name="Jones M."/>
            <person name="Quail M."/>
            <person name="Willey D."/>
            <person name="Hunt A."/>
            <person name="Burton J."/>
            <person name="Sims S."/>
            <person name="McLay K."/>
            <person name="Plumb B."/>
            <person name="Davis J."/>
            <person name="Clee C."/>
            <person name="Oliver K."/>
            <person name="Clark R."/>
            <person name="Riddle C."/>
            <person name="Elliot D."/>
            <person name="Threadgold G."/>
            <person name="Harden G."/>
            <person name="Ware D."/>
            <person name="Begum S."/>
            <person name="Mortimore B."/>
            <person name="Kerry G."/>
            <person name="Heath P."/>
            <person name="Phillimore B."/>
            <person name="Tracey A."/>
            <person name="Corby N."/>
            <person name="Dunn M."/>
            <person name="Johnson C."/>
            <person name="Wood J."/>
            <person name="Clark S."/>
            <person name="Pelan S."/>
            <person name="Griffiths G."/>
            <person name="Smith M."/>
            <person name="Glithero R."/>
            <person name="Howden P."/>
            <person name="Barker N."/>
            <person name="Lloyd C."/>
            <person name="Stevens C."/>
            <person name="Harley J."/>
            <person name="Holt K."/>
            <person name="Panagiotidis G."/>
            <person name="Lovell J."/>
            <person name="Beasley H."/>
            <person name="Henderson C."/>
            <person name="Gordon D."/>
            <person name="Auger K."/>
            <person name="Wright D."/>
            <person name="Collins J."/>
            <person name="Raisen C."/>
            <person name="Dyer L."/>
            <person name="Leung K."/>
            <person name="Robertson L."/>
            <person name="Ambridge K."/>
            <person name="Leongamornlert D."/>
            <person name="McGuire S."/>
            <person name="Gilderthorp R."/>
            <person name="Griffiths C."/>
            <person name="Manthravadi D."/>
            <person name="Nichol S."/>
            <person name="Barker G."/>
            <person name="Whitehead S."/>
            <person name="Kay M."/>
            <person name="Brown J."/>
            <person name="Murnane C."/>
            <person name="Gray E."/>
            <person name="Humphries M."/>
            <person name="Sycamore N."/>
            <person name="Barker D."/>
            <person name="Saunders D."/>
            <person name="Wallis J."/>
            <person name="Babbage A."/>
            <person name="Hammond S."/>
            <person name="Mashreghi-Mohammadi M."/>
            <person name="Barr L."/>
            <person name="Martin S."/>
            <person name="Wray P."/>
            <person name="Ellington A."/>
            <person name="Matthews N."/>
            <person name="Ellwood M."/>
            <person name="Woodmansey R."/>
            <person name="Clark G."/>
            <person name="Cooper J."/>
            <person name="Tromans A."/>
            <person name="Grafham D."/>
            <person name="Skuce C."/>
            <person name="Pandian R."/>
            <person name="Andrews R."/>
            <person name="Harrison E."/>
            <person name="Kimberley A."/>
            <person name="Garnett J."/>
            <person name="Fosker N."/>
            <person name="Hall R."/>
            <person name="Garner P."/>
            <person name="Kelly D."/>
            <person name="Bird C."/>
            <person name="Palmer S."/>
            <person name="Gehring I."/>
            <person name="Berger A."/>
            <person name="Dooley C.M."/>
            <person name="Ersan-Urun Z."/>
            <person name="Eser C."/>
            <person name="Geiger H."/>
            <person name="Geisler M."/>
            <person name="Karotki L."/>
            <person name="Kirn A."/>
            <person name="Konantz J."/>
            <person name="Konantz M."/>
            <person name="Oberlander M."/>
            <person name="Rudolph-Geiger S."/>
            <person name="Teucke M."/>
            <person name="Lanz C."/>
            <person name="Raddatz G."/>
            <person name="Osoegawa K."/>
            <person name="Zhu B."/>
            <person name="Rapp A."/>
            <person name="Widaa S."/>
            <person name="Langford C."/>
            <person name="Yang F."/>
            <person name="Schuster S.C."/>
            <person name="Carter N.P."/>
            <person name="Harrow J."/>
            <person name="Ning Z."/>
            <person name="Herrero J."/>
            <person name="Searle S.M."/>
            <person name="Enright A."/>
            <person name="Geisler R."/>
            <person name="Plasterk R.H."/>
            <person name="Lee C."/>
            <person name="Westerfield M."/>
            <person name="de Jong P.J."/>
            <person name="Zon L.I."/>
            <person name="Postlethwait J.H."/>
            <person name="Nusslein-Volhard C."/>
            <person name="Hubbard T.J."/>
            <person name="Roest Crollius H."/>
            <person name="Rogers J."/>
            <person name="Stemple D.L."/>
        </authorList>
    </citation>
    <scope>NUCLEOTIDE SEQUENCE [LARGE SCALE GENOMIC DNA]</scope>
    <source>
        <strain evidence="6">Tuebingen</strain>
    </source>
</reference>
<reference key="2">
    <citation type="submission" date="2005-04" db="EMBL/GenBank/DDBJ databases">
        <authorList>
            <consortium name="NIH - Zebrafish Gene Collection (ZGC) project"/>
        </authorList>
    </citation>
    <scope>NUCLEOTIDE SEQUENCE [LARGE SCALE MRNA]</scope>
    <source>
        <tissue>Olfactory epithelium</tissue>
    </source>
</reference>
<reference key="3">
    <citation type="journal article" date="2011" name="Fluids Barriers CNS">
        <title>Ecrg4 expression and its product augurin in the choroid plexus: impact on fetal brain development, cerebrospinal fluid homeostasis and neuroprogenitor cell response to CNS injury.</title>
        <authorList>
            <person name="Gonzalez A.M."/>
            <person name="Podvin S."/>
            <person name="Lin S.Y."/>
            <person name="Miller M.C."/>
            <person name="Botfield H."/>
            <person name="Leadbeater W.E."/>
            <person name="Roberton A."/>
            <person name="Dang X."/>
            <person name="Knowling S.E."/>
            <person name="Cardenas-Galindo E."/>
            <person name="Donahue J.E."/>
            <person name="Stopa E.G."/>
            <person name="Johanson C.E."/>
            <person name="Coimbra R."/>
            <person name="Eliceiri B.P."/>
            <person name="Baird A."/>
        </authorList>
    </citation>
    <scope>FUNCTION</scope>
    <scope>DISRUPTION PHENOTYPE</scope>
</reference>
<sequence>MLSEKFHLRLLTLLTLLTALSLTDVASESKLEKLLMKRVDRDVKPAAAVAVSPSKAKEFLTSLKRPKRNLWDRSRPDVQQWIQQFMYMGFDEARLETDLAYWMDQHRSSDQGRQHHYDENAALGPRGAASYRHGANVNYDYY</sequence>
<gene>
    <name evidence="7" type="primary">ecrg4a</name>
    <name type="ORF">zgc:112443</name>
</gene>
<dbReference type="EMBL" id="CABZ01042254">
    <property type="status" value="NOT_ANNOTATED_CDS"/>
    <property type="molecule type" value="Genomic_DNA"/>
</dbReference>
<dbReference type="EMBL" id="CABZ01089983">
    <property type="status" value="NOT_ANNOTATED_CDS"/>
    <property type="molecule type" value="Genomic_DNA"/>
</dbReference>
<dbReference type="EMBL" id="CU639407">
    <property type="status" value="NOT_ANNOTATED_CDS"/>
    <property type="molecule type" value="Genomic_DNA"/>
</dbReference>
<dbReference type="EMBL" id="BC093311">
    <property type="protein sequence ID" value="AAH93311.1"/>
    <property type="molecule type" value="mRNA"/>
</dbReference>
<dbReference type="RefSeq" id="NP_001017697.1">
    <property type="nucleotide sequence ID" value="NM_001017697.1"/>
</dbReference>
<dbReference type="FunCoup" id="Q566V9">
    <property type="interactions" value="1245"/>
</dbReference>
<dbReference type="STRING" id="7955.ENSDARP00000072984"/>
<dbReference type="PaxDb" id="7955-ENSDARP00000072984"/>
<dbReference type="Ensembl" id="ENSDART00000078523">
    <property type="protein sequence ID" value="ENSDARP00000072984"/>
    <property type="gene ID" value="ENSDARG00000056087"/>
</dbReference>
<dbReference type="GeneID" id="791762"/>
<dbReference type="KEGG" id="dre:791762"/>
<dbReference type="AGR" id="ZFIN:ZDB-GENE-050417-189"/>
<dbReference type="CTD" id="791762"/>
<dbReference type="ZFIN" id="ZDB-GENE-050417-189">
    <property type="gene designation" value="ecrg4a"/>
</dbReference>
<dbReference type="eggNOG" id="ENOG502RZPP">
    <property type="taxonomic scope" value="Eukaryota"/>
</dbReference>
<dbReference type="HOGENOM" id="CLU_153579_0_0_1"/>
<dbReference type="InParanoid" id="Q566V9"/>
<dbReference type="OMA" id="MDHARSH"/>
<dbReference type="OrthoDB" id="8915498at2759"/>
<dbReference type="PhylomeDB" id="Q566V9"/>
<dbReference type="TreeFam" id="TF336161"/>
<dbReference type="PRO" id="PR:Q566V9"/>
<dbReference type="Proteomes" id="UP000000437">
    <property type="component" value="Chromosome 9"/>
</dbReference>
<dbReference type="Bgee" id="ENSDARG00000056087">
    <property type="expression patterns" value="Expressed in bone element and 15 other cell types or tissues"/>
</dbReference>
<dbReference type="ExpressionAtlas" id="Q566V9">
    <property type="expression patterns" value="baseline"/>
</dbReference>
<dbReference type="GO" id="GO:0016324">
    <property type="term" value="C:apical plasma membrane"/>
    <property type="evidence" value="ECO:0000250"/>
    <property type="project" value="UniProtKB"/>
</dbReference>
<dbReference type="GO" id="GO:0005737">
    <property type="term" value="C:cytoplasm"/>
    <property type="evidence" value="ECO:0000250"/>
    <property type="project" value="UniProtKB"/>
</dbReference>
<dbReference type="GO" id="GO:0005615">
    <property type="term" value="C:extracellular space"/>
    <property type="evidence" value="ECO:0000250"/>
    <property type="project" value="UniProtKB"/>
</dbReference>
<dbReference type="GO" id="GO:0031145">
    <property type="term" value="P:anaphase-promoting complex-dependent catabolic process"/>
    <property type="evidence" value="ECO:0000318"/>
    <property type="project" value="GO_Central"/>
</dbReference>
<dbReference type="GO" id="GO:0090398">
    <property type="term" value="P:cellular senescence"/>
    <property type="evidence" value="ECO:0000318"/>
    <property type="project" value="GO_Central"/>
</dbReference>
<dbReference type="GO" id="GO:0007417">
    <property type="term" value="P:central nervous system development"/>
    <property type="evidence" value="ECO:0000315"/>
    <property type="project" value="ZFIN"/>
</dbReference>
<dbReference type="GO" id="GO:0070314">
    <property type="term" value="P:G1 to G0 transition"/>
    <property type="evidence" value="ECO:0000318"/>
    <property type="project" value="GO_Central"/>
</dbReference>
<dbReference type="GO" id="GO:0008285">
    <property type="term" value="P:negative regulation of cell population proliferation"/>
    <property type="evidence" value="ECO:0000250"/>
    <property type="project" value="UniProtKB"/>
</dbReference>
<dbReference type="GO" id="GO:0042127">
    <property type="term" value="P:regulation of cell population proliferation"/>
    <property type="evidence" value="ECO:0000315"/>
    <property type="project" value="ZFIN"/>
</dbReference>
<dbReference type="GO" id="GO:0009611">
    <property type="term" value="P:response to wounding"/>
    <property type="evidence" value="ECO:0000250"/>
    <property type="project" value="UniProtKB"/>
</dbReference>
<dbReference type="InterPro" id="IPR028173">
    <property type="entry name" value="Augurin"/>
</dbReference>
<dbReference type="PANTHER" id="PTHR31613">
    <property type="entry name" value="AUGURIN"/>
    <property type="match status" value="1"/>
</dbReference>
<dbReference type="PANTHER" id="PTHR31613:SF2">
    <property type="entry name" value="AUGURIN"/>
    <property type="match status" value="1"/>
</dbReference>
<dbReference type="Pfam" id="PF15187">
    <property type="entry name" value="Augurin"/>
    <property type="match status" value="1"/>
</dbReference>
<organism evidence="6">
    <name type="scientific">Danio rerio</name>
    <name type="common">Zebrafish</name>
    <name type="synonym">Brachydanio rerio</name>
    <dbReference type="NCBI Taxonomy" id="7955"/>
    <lineage>
        <taxon>Eukaryota</taxon>
        <taxon>Metazoa</taxon>
        <taxon>Chordata</taxon>
        <taxon>Craniata</taxon>
        <taxon>Vertebrata</taxon>
        <taxon>Euteleostomi</taxon>
        <taxon>Actinopterygii</taxon>
        <taxon>Neopterygii</taxon>
        <taxon>Teleostei</taxon>
        <taxon>Ostariophysi</taxon>
        <taxon>Cypriniformes</taxon>
        <taxon>Danionidae</taxon>
        <taxon>Danioninae</taxon>
        <taxon>Danio</taxon>
    </lineage>
</organism>
<name>AUGNA_DANRE</name>
<accession>Q566V9</accession>
<accession>F1R4S5</accession>
<comment type="function">
    <text evidence="1 4">Probable hormone (By similarity). Required for the proper formation of the central nervous system by attenuating cell proliferation during development (PubMed:21349154).</text>
</comment>
<comment type="subcellular location">
    <subcellularLocation>
        <location evidence="2">Secreted</location>
    </subcellularLocation>
    <subcellularLocation>
        <location evidence="2">Cytoplasm</location>
    </subcellularLocation>
    <subcellularLocation>
        <location evidence="2">Apical cell membrane</location>
    </subcellularLocation>
</comment>
<comment type="disruption phenotype">
    <text evidence="4">Morpholino knockdown causes severe defects in the development of the central nervous system, including enlarged hindbrain ventricles resembling a brain ventricular hydrocephalus-like edema phenotype (PubMed:21349154). Increased cell proliferation of glial fibrillary acidic protein (GFAP)-positive cells in the developing central nervous system (PubMed:21349154).</text>
</comment>
<comment type="similarity">
    <text evidence="5">Belongs to the augurin family.</text>
</comment>
<feature type="signal peptide" evidence="3">
    <location>
        <begin position="1"/>
        <end position="28"/>
    </location>
</feature>
<feature type="propeptide" id="PRO_0000446067" evidence="1">
    <location>
        <begin position="29"/>
        <end position="66"/>
    </location>
</feature>
<feature type="peptide" id="PRO_0000359772" description="Augurin-A">
    <location>
        <begin position="69"/>
        <end position="126"/>
    </location>
</feature>
<feature type="propeptide" id="PRO_0000363242" evidence="3">
    <location>
        <begin position="127"/>
        <end position="142"/>
    </location>
</feature>
<feature type="sequence conflict" description="In Ref. 2; AAH93311." evidence="5" ref="2">
    <original>R</original>
    <variation>H</variation>
    <location>
        <position position="9"/>
    </location>
</feature>
<feature type="sequence conflict" description="In Ref. 2; AAH93311." evidence="5" ref="2">
    <original>S</original>
    <variation>A</variation>
    <location>
        <position position="21"/>
    </location>
</feature>
<keyword id="KW-1003">Cell membrane</keyword>
<keyword id="KW-0165">Cleavage on pair of basic residues</keyword>
<keyword id="KW-0963">Cytoplasm</keyword>
<keyword id="KW-0472">Membrane</keyword>
<keyword id="KW-1185">Reference proteome</keyword>
<keyword id="KW-0964">Secreted</keyword>
<keyword id="KW-0732">Signal</keyword>
<evidence type="ECO:0000250" key="1">
    <source>
        <dbReference type="UniProtKB" id="D4A540"/>
    </source>
</evidence>
<evidence type="ECO:0000250" key="2">
    <source>
        <dbReference type="UniProtKB" id="Q9H1Z8"/>
    </source>
</evidence>
<evidence type="ECO:0000255" key="3"/>
<evidence type="ECO:0000269" key="4">
    <source>
    </source>
</evidence>
<evidence type="ECO:0000305" key="5"/>
<evidence type="ECO:0000312" key="6">
    <source>
        <dbReference type="Proteomes" id="UP000000437"/>
    </source>
</evidence>
<evidence type="ECO:0000312" key="7">
    <source>
        <dbReference type="ZFIN" id="ZDB-GENE-050417-189"/>
    </source>
</evidence>
<protein>
    <recommendedName>
        <fullName>Augurin-A</fullName>
    </recommendedName>
    <alternativeName>
        <fullName evidence="7">Esophageal cancer-related gene 4-A protein homolog</fullName>
    </alternativeName>
</protein>